<keyword id="KW-0027">Amidation</keyword>
<keyword id="KW-0903">Direct protein sequencing</keyword>
<keyword id="KW-0372">Hormone</keyword>
<keyword id="KW-0964">Secreted</keyword>
<comment type="function">
    <text evidence="1">Hormone secreted by pancreatic cells that acts as a regulator of pancreatic and gastrointestinal functions probably by signaling through the G protein-coupled receptor NPY4R2.</text>
</comment>
<comment type="subcellular location">
    <subcellularLocation>
        <location evidence="1">Secreted</location>
    </subcellularLocation>
</comment>
<comment type="similarity">
    <text evidence="4">Belongs to the NPY family.</text>
</comment>
<organism>
    <name type="scientific">Tapirus pinchaque</name>
    <name type="common">Mountain tapir</name>
    <dbReference type="NCBI Taxonomy" id="30582"/>
    <lineage>
        <taxon>Eukaryota</taxon>
        <taxon>Metazoa</taxon>
        <taxon>Chordata</taxon>
        <taxon>Craniata</taxon>
        <taxon>Vertebrata</taxon>
        <taxon>Euteleostomi</taxon>
        <taxon>Mammalia</taxon>
        <taxon>Eutheria</taxon>
        <taxon>Laurasiatheria</taxon>
        <taxon>Perissodactyla</taxon>
        <taxon>Tapiridae</taxon>
        <taxon>Tapirus</taxon>
    </lineage>
</organism>
<protein>
    <recommendedName>
        <fullName evidence="3">Pancreatic polypeptide</fullName>
        <shortName evidence="3">PP</shortName>
    </recommendedName>
</protein>
<sequence>APLEPVYPGDNATPEQMAQYAAELRRYINMLTRPRY</sequence>
<dbReference type="PIR" id="C61132">
    <property type="entry name" value="C61132"/>
</dbReference>
<dbReference type="BMRB" id="P39659"/>
<dbReference type="SMR" id="P39659"/>
<dbReference type="GO" id="GO:0005615">
    <property type="term" value="C:extracellular space"/>
    <property type="evidence" value="ECO:0007669"/>
    <property type="project" value="TreeGrafter"/>
</dbReference>
<dbReference type="GO" id="GO:0005184">
    <property type="term" value="F:neuropeptide hormone activity"/>
    <property type="evidence" value="ECO:0007669"/>
    <property type="project" value="TreeGrafter"/>
</dbReference>
<dbReference type="GO" id="GO:0031841">
    <property type="term" value="F:neuropeptide Y receptor binding"/>
    <property type="evidence" value="ECO:0007669"/>
    <property type="project" value="TreeGrafter"/>
</dbReference>
<dbReference type="GO" id="GO:0007631">
    <property type="term" value="P:feeding behavior"/>
    <property type="evidence" value="ECO:0007669"/>
    <property type="project" value="TreeGrafter"/>
</dbReference>
<dbReference type="GO" id="GO:0007218">
    <property type="term" value="P:neuropeptide signaling pathway"/>
    <property type="evidence" value="ECO:0007669"/>
    <property type="project" value="TreeGrafter"/>
</dbReference>
<dbReference type="CDD" id="cd00126">
    <property type="entry name" value="PAH"/>
    <property type="match status" value="1"/>
</dbReference>
<dbReference type="Gene3D" id="6.10.250.900">
    <property type="match status" value="1"/>
</dbReference>
<dbReference type="InterPro" id="IPR001955">
    <property type="entry name" value="Pancreatic_hormone-like"/>
</dbReference>
<dbReference type="InterPro" id="IPR020392">
    <property type="entry name" value="Pancreatic_hormone-like_CS"/>
</dbReference>
<dbReference type="PANTHER" id="PTHR10533">
    <property type="entry name" value="NEUROPEPTIDE Y/PANCREATIC HORMONE/PEPTIDE YY"/>
    <property type="match status" value="1"/>
</dbReference>
<dbReference type="PANTHER" id="PTHR10533:SF2">
    <property type="entry name" value="PANCREATIC POLYPEPTIDE PROHORMONE"/>
    <property type="match status" value="1"/>
</dbReference>
<dbReference type="Pfam" id="PF00159">
    <property type="entry name" value="Hormone_3"/>
    <property type="match status" value="1"/>
</dbReference>
<dbReference type="PRINTS" id="PR00278">
    <property type="entry name" value="PANCHORMONE"/>
</dbReference>
<dbReference type="SMART" id="SM00309">
    <property type="entry name" value="PAH"/>
    <property type="match status" value="1"/>
</dbReference>
<dbReference type="PROSITE" id="PS00265">
    <property type="entry name" value="PANCREATIC_HORMONE_1"/>
    <property type="match status" value="1"/>
</dbReference>
<dbReference type="PROSITE" id="PS50276">
    <property type="entry name" value="PANCREATIC_HORMONE_2"/>
    <property type="match status" value="1"/>
</dbReference>
<gene>
    <name type="primary">PPY</name>
</gene>
<evidence type="ECO:0000250" key="1">
    <source>
        <dbReference type="UniProtKB" id="P01298"/>
    </source>
</evidence>
<evidence type="ECO:0000269" key="2">
    <source>
    </source>
</evidence>
<evidence type="ECO:0000303" key="3">
    <source>
    </source>
</evidence>
<evidence type="ECO:0000305" key="4"/>
<name>PAHO_TAPPI</name>
<reference key="1">
    <citation type="journal article" date="1991" name="Gen. Comp. Endocrinol.">
        <title>Primary structure of pancreatic polypeptide from four species of Perissodactyla (Przewalski's horse, zebra, rhino, tapir).</title>
        <authorList>
            <person name="Henry J.S."/>
            <person name="Lance V.A."/>
            <person name="Conlon J.M."/>
        </authorList>
    </citation>
    <scope>PROTEIN SEQUENCE</scope>
    <scope>AMIDATION AT TYR-36</scope>
    <source>
        <tissue>Pancreas</tissue>
    </source>
</reference>
<proteinExistence type="evidence at protein level"/>
<accession>P39659</accession>
<feature type="peptide" id="PRO_0000044802" description="Pancreatic polypeptide">
    <location>
        <begin position="1"/>
        <end position="36"/>
    </location>
</feature>
<feature type="modified residue" description="Tyrosine amide" evidence="2">
    <location>
        <position position="36"/>
    </location>
</feature>